<protein>
    <recommendedName>
        <fullName evidence="3">Large ribosomal subunit protein uL5c</fullName>
    </recommendedName>
    <alternativeName>
        <fullName>50S ribosomal protein L5, chloroplastic</fullName>
    </alternativeName>
</protein>
<reference key="1">
    <citation type="journal article" date="1999" name="Nature">
        <title>Sequence and analysis of chromosome 4 of the plant Arabidopsis thaliana.</title>
        <authorList>
            <person name="Mayer K.F.X."/>
            <person name="Schueller C."/>
            <person name="Wambutt R."/>
            <person name="Murphy G."/>
            <person name="Volckaert G."/>
            <person name="Pohl T."/>
            <person name="Duesterhoeft A."/>
            <person name="Stiekema W."/>
            <person name="Entian K.-D."/>
            <person name="Terryn N."/>
            <person name="Harris B."/>
            <person name="Ansorge W."/>
            <person name="Brandt P."/>
            <person name="Grivell L.A."/>
            <person name="Rieger M."/>
            <person name="Weichselgartner M."/>
            <person name="de Simone V."/>
            <person name="Obermaier B."/>
            <person name="Mache R."/>
            <person name="Mueller M."/>
            <person name="Kreis M."/>
            <person name="Delseny M."/>
            <person name="Puigdomenech P."/>
            <person name="Watson M."/>
            <person name="Schmidtheini T."/>
            <person name="Reichert B."/>
            <person name="Portetelle D."/>
            <person name="Perez-Alonso M."/>
            <person name="Boutry M."/>
            <person name="Bancroft I."/>
            <person name="Vos P."/>
            <person name="Hoheisel J."/>
            <person name="Zimmermann W."/>
            <person name="Wedler H."/>
            <person name="Ridley P."/>
            <person name="Langham S.-A."/>
            <person name="McCullagh B."/>
            <person name="Bilham L."/>
            <person name="Robben J."/>
            <person name="van der Schueren J."/>
            <person name="Grymonprez B."/>
            <person name="Chuang Y.-J."/>
            <person name="Vandenbussche F."/>
            <person name="Braeken M."/>
            <person name="Weltjens I."/>
            <person name="Voet M."/>
            <person name="Bastiaens I."/>
            <person name="Aert R."/>
            <person name="Defoor E."/>
            <person name="Weitzenegger T."/>
            <person name="Bothe G."/>
            <person name="Ramsperger U."/>
            <person name="Hilbert H."/>
            <person name="Braun M."/>
            <person name="Holzer E."/>
            <person name="Brandt A."/>
            <person name="Peters S."/>
            <person name="van Staveren M."/>
            <person name="Dirkse W."/>
            <person name="Mooijman P."/>
            <person name="Klein Lankhorst R."/>
            <person name="Rose M."/>
            <person name="Hauf J."/>
            <person name="Koetter P."/>
            <person name="Berneiser S."/>
            <person name="Hempel S."/>
            <person name="Feldpausch M."/>
            <person name="Lamberth S."/>
            <person name="Van den Daele H."/>
            <person name="De Keyser A."/>
            <person name="Buysshaert C."/>
            <person name="Gielen J."/>
            <person name="Villarroel R."/>
            <person name="De Clercq R."/>
            <person name="van Montagu M."/>
            <person name="Rogers J."/>
            <person name="Cronin A."/>
            <person name="Quail M.A."/>
            <person name="Bray-Allen S."/>
            <person name="Clark L."/>
            <person name="Doggett J."/>
            <person name="Hall S."/>
            <person name="Kay M."/>
            <person name="Lennard N."/>
            <person name="McLay K."/>
            <person name="Mayes R."/>
            <person name="Pettett A."/>
            <person name="Rajandream M.A."/>
            <person name="Lyne M."/>
            <person name="Benes V."/>
            <person name="Rechmann S."/>
            <person name="Borkova D."/>
            <person name="Bloecker H."/>
            <person name="Scharfe M."/>
            <person name="Grimm M."/>
            <person name="Loehnert T.-H."/>
            <person name="Dose S."/>
            <person name="de Haan M."/>
            <person name="Maarse A.C."/>
            <person name="Schaefer M."/>
            <person name="Mueller-Auer S."/>
            <person name="Gabel C."/>
            <person name="Fuchs M."/>
            <person name="Fartmann B."/>
            <person name="Granderath K."/>
            <person name="Dauner D."/>
            <person name="Herzl A."/>
            <person name="Neumann S."/>
            <person name="Argiriou A."/>
            <person name="Vitale D."/>
            <person name="Liguori R."/>
            <person name="Piravandi E."/>
            <person name="Massenet O."/>
            <person name="Quigley F."/>
            <person name="Clabauld G."/>
            <person name="Muendlein A."/>
            <person name="Felber R."/>
            <person name="Schnabl S."/>
            <person name="Hiller R."/>
            <person name="Schmidt W."/>
            <person name="Lecharny A."/>
            <person name="Aubourg S."/>
            <person name="Chefdor F."/>
            <person name="Cooke R."/>
            <person name="Berger C."/>
            <person name="Monfort A."/>
            <person name="Casacuberta E."/>
            <person name="Gibbons T."/>
            <person name="Weber N."/>
            <person name="Vandenbol M."/>
            <person name="Bargues M."/>
            <person name="Terol J."/>
            <person name="Torres A."/>
            <person name="Perez-Perez A."/>
            <person name="Purnelle B."/>
            <person name="Bent E."/>
            <person name="Johnson S."/>
            <person name="Tacon D."/>
            <person name="Jesse T."/>
            <person name="Heijnen L."/>
            <person name="Schwarz S."/>
            <person name="Scholler P."/>
            <person name="Heber S."/>
            <person name="Francs P."/>
            <person name="Bielke C."/>
            <person name="Frishman D."/>
            <person name="Haase D."/>
            <person name="Lemcke K."/>
            <person name="Mewes H.-W."/>
            <person name="Stocker S."/>
            <person name="Zaccaria P."/>
            <person name="Bevan M."/>
            <person name="Wilson R.K."/>
            <person name="de la Bastide M."/>
            <person name="Habermann K."/>
            <person name="Parnell L."/>
            <person name="Dedhia N."/>
            <person name="Gnoj L."/>
            <person name="Schutz K."/>
            <person name="Huang E."/>
            <person name="Spiegel L."/>
            <person name="Sekhon M."/>
            <person name="Murray J."/>
            <person name="Sheet P."/>
            <person name="Cordes M."/>
            <person name="Abu-Threideh J."/>
            <person name="Stoneking T."/>
            <person name="Kalicki J."/>
            <person name="Graves T."/>
            <person name="Harmon G."/>
            <person name="Edwards J."/>
            <person name="Latreille P."/>
            <person name="Courtney L."/>
            <person name="Cloud J."/>
            <person name="Abbott A."/>
            <person name="Scott K."/>
            <person name="Johnson D."/>
            <person name="Minx P."/>
            <person name="Bentley D."/>
            <person name="Fulton B."/>
            <person name="Miller N."/>
            <person name="Greco T."/>
            <person name="Kemp K."/>
            <person name="Kramer J."/>
            <person name="Fulton L."/>
            <person name="Mardis E."/>
            <person name="Dante M."/>
            <person name="Pepin K."/>
            <person name="Hillier L.W."/>
            <person name="Nelson J."/>
            <person name="Spieth J."/>
            <person name="Ryan E."/>
            <person name="Andrews S."/>
            <person name="Geisel C."/>
            <person name="Layman D."/>
            <person name="Du H."/>
            <person name="Ali J."/>
            <person name="Berghoff A."/>
            <person name="Jones K."/>
            <person name="Drone K."/>
            <person name="Cotton M."/>
            <person name="Joshu C."/>
            <person name="Antonoiu B."/>
            <person name="Zidanic M."/>
            <person name="Strong C."/>
            <person name="Sun H."/>
            <person name="Lamar B."/>
            <person name="Yordan C."/>
            <person name="Ma P."/>
            <person name="Zhong J."/>
            <person name="Preston R."/>
            <person name="Vil D."/>
            <person name="Shekher M."/>
            <person name="Matero A."/>
            <person name="Shah R."/>
            <person name="Swaby I.K."/>
            <person name="O'Shaughnessy A."/>
            <person name="Rodriguez M."/>
            <person name="Hoffman J."/>
            <person name="Till S."/>
            <person name="Granat S."/>
            <person name="Shohdy N."/>
            <person name="Hasegawa A."/>
            <person name="Hameed A."/>
            <person name="Lodhi M."/>
            <person name="Johnson A."/>
            <person name="Chen E."/>
            <person name="Marra M.A."/>
            <person name="Martienssen R."/>
            <person name="McCombie W.R."/>
        </authorList>
    </citation>
    <scope>NUCLEOTIDE SEQUENCE [LARGE SCALE GENOMIC DNA]</scope>
    <source>
        <strain>cv. Columbia</strain>
    </source>
</reference>
<reference key="2">
    <citation type="journal article" date="2017" name="Plant J.">
        <title>Araport11: a complete reannotation of the Arabidopsis thaliana reference genome.</title>
        <authorList>
            <person name="Cheng C.Y."/>
            <person name="Krishnakumar V."/>
            <person name="Chan A.P."/>
            <person name="Thibaud-Nissen F."/>
            <person name="Schobel S."/>
            <person name="Town C.D."/>
        </authorList>
    </citation>
    <scope>GENOME REANNOTATION</scope>
    <source>
        <strain>cv. Columbia</strain>
    </source>
</reference>
<reference key="3">
    <citation type="journal article" date="2003" name="Science">
        <title>Empirical analysis of transcriptional activity in the Arabidopsis genome.</title>
        <authorList>
            <person name="Yamada K."/>
            <person name="Lim J."/>
            <person name="Dale J.M."/>
            <person name="Chen H."/>
            <person name="Shinn P."/>
            <person name="Palm C.J."/>
            <person name="Southwick A.M."/>
            <person name="Wu H.C."/>
            <person name="Kim C.J."/>
            <person name="Nguyen M."/>
            <person name="Pham P.K."/>
            <person name="Cheuk R.F."/>
            <person name="Karlin-Newmann G."/>
            <person name="Liu S.X."/>
            <person name="Lam B."/>
            <person name="Sakano H."/>
            <person name="Wu T."/>
            <person name="Yu G."/>
            <person name="Miranda M."/>
            <person name="Quach H.L."/>
            <person name="Tripp M."/>
            <person name="Chang C.H."/>
            <person name="Lee J.M."/>
            <person name="Toriumi M.J."/>
            <person name="Chan M.M."/>
            <person name="Tang C.C."/>
            <person name="Onodera C.S."/>
            <person name="Deng J.M."/>
            <person name="Akiyama K."/>
            <person name="Ansari Y."/>
            <person name="Arakawa T."/>
            <person name="Banh J."/>
            <person name="Banno F."/>
            <person name="Bowser L."/>
            <person name="Brooks S.Y."/>
            <person name="Carninci P."/>
            <person name="Chao Q."/>
            <person name="Choy N."/>
            <person name="Enju A."/>
            <person name="Goldsmith A.D."/>
            <person name="Gurjal M."/>
            <person name="Hansen N.F."/>
            <person name="Hayashizaki Y."/>
            <person name="Johnson-Hopson C."/>
            <person name="Hsuan V.W."/>
            <person name="Iida K."/>
            <person name="Karnes M."/>
            <person name="Khan S."/>
            <person name="Koesema E."/>
            <person name="Ishida J."/>
            <person name="Jiang P.X."/>
            <person name="Jones T."/>
            <person name="Kawai J."/>
            <person name="Kamiya A."/>
            <person name="Meyers C."/>
            <person name="Nakajima M."/>
            <person name="Narusaka M."/>
            <person name="Seki M."/>
            <person name="Sakurai T."/>
            <person name="Satou M."/>
            <person name="Tamse R."/>
            <person name="Vaysberg M."/>
            <person name="Wallender E.K."/>
            <person name="Wong C."/>
            <person name="Yamamura Y."/>
            <person name="Yuan S."/>
            <person name="Shinozaki K."/>
            <person name="Davis R.W."/>
            <person name="Theologis A."/>
            <person name="Ecker J.R."/>
        </authorList>
    </citation>
    <scope>NUCLEOTIDE SEQUENCE [LARGE SCALE MRNA]</scope>
    <source>
        <strain>cv. Columbia</strain>
    </source>
</reference>
<reference key="4">
    <citation type="submission" date="2002-03" db="EMBL/GenBank/DDBJ databases">
        <title>Full-length cDNA from Arabidopsis thaliana.</title>
        <authorList>
            <person name="Brover V.V."/>
            <person name="Troukhan M.E."/>
            <person name="Alexandrov N.A."/>
            <person name="Lu Y.-P."/>
            <person name="Flavell R.B."/>
            <person name="Feldmann K.A."/>
        </authorList>
    </citation>
    <scope>NUCLEOTIDE SEQUENCE [LARGE SCALE MRNA]</scope>
</reference>
<reference key="5">
    <citation type="journal article" date="2023" name="Plant Cell">
        <title>An updated nomenclature for plant ribosomal protein genes.</title>
        <authorList>
            <person name="Scarpin M.R."/>
            <person name="Busche M."/>
            <person name="Martinez R.E."/>
            <person name="Harper L.C."/>
            <person name="Reiser L."/>
            <person name="Szakonyi D."/>
            <person name="Merchante C."/>
            <person name="Lan T."/>
            <person name="Xiong W."/>
            <person name="Mo B."/>
            <person name="Tang G."/>
            <person name="Chen X."/>
            <person name="Bailey-Serres J."/>
            <person name="Browning K.S."/>
            <person name="Brunkard J.O."/>
        </authorList>
    </citation>
    <scope>NOMENCLATURE</scope>
</reference>
<dbReference type="EMBL" id="AF007269">
    <property type="protein sequence ID" value="AAB61015.1"/>
    <property type="molecule type" value="Genomic_DNA"/>
</dbReference>
<dbReference type="EMBL" id="AL161491">
    <property type="protein sequence ID" value="CAB80940.1"/>
    <property type="molecule type" value="Genomic_DNA"/>
</dbReference>
<dbReference type="EMBL" id="CP002687">
    <property type="protein sequence ID" value="AEE82007.1"/>
    <property type="molecule type" value="Genomic_DNA"/>
</dbReference>
<dbReference type="EMBL" id="AY056194">
    <property type="protein sequence ID" value="AAL07043.1"/>
    <property type="molecule type" value="mRNA"/>
</dbReference>
<dbReference type="EMBL" id="AY114008">
    <property type="protein sequence ID" value="AAM45056.1"/>
    <property type="molecule type" value="mRNA"/>
</dbReference>
<dbReference type="EMBL" id="AY086243">
    <property type="protein sequence ID" value="AAM64318.1"/>
    <property type="molecule type" value="mRNA"/>
</dbReference>
<dbReference type="PIR" id="T01713">
    <property type="entry name" value="T01713"/>
</dbReference>
<dbReference type="RefSeq" id="NP_192040.1">
    <property type="nucleotide sequence ID" value="NM_116361.4"/>
</dbReference>
<dbReference type="SMR" id="O04603"/>
<dbReference type="BioGRID" id="13238">
    <property type="interactions" value="63"/>
</dbReference>
<dbReference type="FunCoup" id="O04603">
    <property type="interactions" value="1040"/>
</dbReference>
<dbReference type="IntAct" id="O04603">
    <property type="interactions" value="1"/>
</dbReference>
<dbReference type="STRING" id="3702.O04603"/>
<dbReference type="iPTMnet" id="O04603"/>
<dbReference type="MetOSite" id="O04603"/>
<dbReference type="PaxDb" id="3702-AT4G01310.1"/>
<dbReference type="ProteomicsDB" id="234713"/>
<dbReference type="EnsemblPlants" id="AT4G01310.1">
    <property type="protein sequence ID" value="AT4G01310.1"/>
    <property type="gene ID" value="AT4G01310"/>
</dbReference>
<dbReference type="GeneID" id="827947"/>
<dbReference type="Gramene" id="AT4G01310.1">
    <property type="protein sequence ID" value="AT4G01310.1"/>
    <property type="gene ID" value="AT4G01310"/>
</dbReference>
<dbReference type="KEGG" id="ath:AT4G01310"/>
<dbReference type="Araport" id="AT4G01310"/>
<dbReference type="TAIR" id="AT4G01310">
    <property type="gene designation" value="PRPL5"/>
</dbReference>
<dbReference type="eggNOG" id="KOG0398">
    <property type="taxonomic scope" value="Eukaryota"/>
</dbReference>
<dbReference type="HOGENOM" id="CLU_061015_0_1_1"/>
<dbReference type="InParanoid" id="O04603"/>
<dbReference type="OMA" id="KLKAHHF"/>
<dbReference type="OrthoDB" id="539541at2759"/>
<dbReference type="PhylomeDB" id="O04603"/>
<dbReference type="CD-CODE" id="4299E36E">
    <property type="entry name" value="Nucleolus"/>
</dbReference>
<dbReference type="PRO" id="PR:O04603"/>
<dbReference type="Proteomes" id="UP000006548">
    <property type="component" value="Chromosome 4"/>
</dbReference>
<dbReference type="ExpressionAtlas" id="O04603">
    <property type="expression patterns" value="baseline and differential"/>
</dbReference>
<dbReference type="GO" id="GO:0009507">
    <property type="term" value="C:chloroplast"/>
    <property type="evidence" value="ECO:0007005"/>
    <property type="project" value="TAIR"/>
</dbReference>
<dbReference type="GO" id="GO:0009941">
    <property type="term" value="C:chloroplast envelope"/>
    <property type="evidence" value="ECO:0007005"/>
    <property type="project" value="TAIR"/>
</dbReference>
<dbReference type="GO" id="GO:0009570">
    <property type="term" value="C:chloroplast stroma"/>
    <property type="evidence" value="ECO:0007005"/>
    <property type="project" value="TAIR"/>
</dbReference>
<dbReference type="GO" id="GO:0005829">
    <property type="term" value="C:cytosol"/>
    <property type="evidence" value="ECO:0007005"/>
    <property type="project" value="TAIR"/>
</dbReference>
<dbReference type="GO" id="GO:0022626">
    <property type="term" value="C:cytosolic ribosome"/>
    <property type="evidence" value="ECO:0007005"/>
    <property type="project" value="TAIR"/>
</dbReference>
<dbReference type="GO" id="GO:1990904">
    <property type="term" value="C:ribonucleoprotein complex"/>
    <property type="evidence" value="ECO:0007669"/>
    <property type="project" value="UniProtKB-KW"/>
</dbReference>
<dbReference type="GO" id="GO:0003729">
    <property type="term" value="F:mRNA binding"/>
    <property type="evidence" value="ECO:0000314"/>
    <property type="project" value="TAIR"/>
</dbReference>
<dbReference type="GO" id="GO:0019843">
    <property type="term" value="F:rRNA binding"/>
    <property type="evidence" value="ECO:0007669"/>
    <property type="project" value="UniProtKB-KW"/>
</dbReference>
<dbReference type="GO" id="GO:0003735">
    <property type="term" value="F:structural constituent of ribosome"/>
    <property type="evidence" value="ECO:0007669"/>
    <property type="project" value="InterPro"/>
</dbReference>
<dbReference type="GO" id="GO:0006412">
    <property type="term" value="P:translation"/>
    <property type="evidence" value="ECO:0007669"/>
    <property type="project" value="InterPro"/>
</dbReference>
<dbReference type="FunFam" id="3.30.1440.10:FF:000001">
    <property type="entry name" value="50S ribosomal protein L5"/>
    <property type="match status" value="1"/>
</dbReference>
<dbReference type="Gene3D" id="3.30.1440.10">
    <property type="match status" value="1"/>
</dbReference>
<dbReference type="HAMAP" id="MF_01333_B">
    <property type="entry name" value="Ribosomal_uL5_B"/>
    <property type="match status" value="1"/>
</dbReference>
<dbReference type="InterPro" id="IPR002132">
    <property type="entry name" value="Ribosomal_uL5"/>
</dbReference>
<dbReference type="InterPro" id="IPR020930">
    <property type="entry name" value="Ribosomal_uL5_bac-type"/>
</dbReference>
<dbReference type="InterPro" id="IPR031309">
    <property type="entry name" value="Ribosomal_uL5_C"/>
</dbReference>
<dbReference type="InterPro" id="IPR020929">
    <property type="entry name" value="Ribosomal_uL5_CS"/>
</dbReference>
<dbReference type="InterPro" id="IPR022803">
    <property type="entry name" value="Ribosomal_uL5_dom_sf"/>
</dbReference>
<dbReference type="InterPro" id="IPR031310">
    <property type="entry name" value="Ribosomal_uL5_N"/>
</dbReference>
<dbReference type="NCBIfam" id="NF000585">
    <property type="entry name" value="PRK00010.1"/>
    <property type="match status" value="1"/>
</dbReference>
<dbReference type="PANTHER" id="PTHR11994">
    <property type="entry name" value="60S RIBOSOMAL PROTEIN L11-RELATED"/>
    <property type="match status" value="1"/>
</dbReference>
<dbReference type="Pfam" id="PF00281">
    <property type="entry name" value="Ribosomal_L5"/>
    <property type="match status" value="1"/>
</dbReference>
<dbReference type="Pfam" id="PF00673">
    <property type="entry name" value="Ribosomal_L5_C"/>
    <property type="match status" value="1"/>
</dbReference>
<dbReference type="SUPFAM" id="SSF55282">
    <property type="entry name" value="RL5-like"/>
    <property type="match status" value="1"/>
</dbReference>
<dbReference type="PROSITE" id="PS00358">
    <property type="entry name" value="RIBOSOMAL_L5"/>
    <property type="match status" value="1"/>
</dbReference>
<comment type="function">
    <text evidence="1">Binds 5S rRNA, forms part of the central protuberance of the 50S subunit.</text>
</comment>
<comment type="subunit">
    <text evidence="1">Part of the 50S ribosomal subunit; contacts the 5S rRNA.</text>
</comment>
<comment type="subcellular location">
    <subcellularLocation>
        <location>Plastid</location>
        <location>Chloroplast</location>
    </subcellularLocation>
</comment>
<comment type="similarity">
    <text evidence="4">Belongs to the universal ribosomal protein uL5 family.</text>
</comment>
<sequence>MASPSLLQSSASSFHGRFSPLAAPSSARMLSPPLRNVVKVSASGTVLVEKSEAEKTQRLKTAYLERIIPALKEEFKYVNIHQVPKVQKIVVNCGIGDAAQNDKGLEAAMKDIALITGQKPIKTRARASIATFKIREDQPLGIAVTLRGDVMYSFLDRLINLALPRTRDFQGVSPSSFDGNGNYSIGVKDQGVFPEIRFDAVGKTRGMDVCISTTAKSDQEGQKLLALMGMPFREGGGGSTGAIVRKKKLKSHHFDAKGKGKR</sequence>
<accession>O04603</accession>
<proteinExistence type="evidence at transcript level"/>
<organism>
    <name type="scientific">Arabidopsis thaliana</name>
    <name type="common">Mouse-ear cress</name>
    <dbReference type="NCBI Taxonomy" id="3702"/>
    <lineage>
        <taxon>Eukaryota</taxon>
        <taxon>Viridiplantae</taxon>
        <taxon>Streptophyta</taxon>
        <taxon>Embryophyta</taxon>
        <taxon>Tracheophyta</taxon>
        <taxon>Spermatophyta</taxon>
        <taxon>Magnoliopsida</taxon>
        <taxon>eudicotyledons</taxon>
        <taxon>Gunneridae</taxon>
        <taxon>Pentapetalae</taxon>
        <taxon>rosids</taxon>
        <taxon>malvids</taxon>
        <taxon>Brassicales</taxon>
        <taxon>Brassicaceae</taxon>
        <taxon>Camelineae</taxon>
        <taxon>Arabidopsis</taxon>
    </lineage>
</organism>
<evidence type="ECO:0000250" key="1"/>
<evidence type="ECO:0000255" key="2"/>
<evidence type="ECO:0000303" key="3">
    <source>
    </source>
</evidence>
<evidence type="ECO:0000305" key="4"/>
<feature type="transit peptide" description="Chloroplast" evidence="2">
    <location>
        <begin position="1"/>
        <end position="39"/>
    </location>
</feature>
<feature type="chain" id="PRO_0000030542" description="Large ribosomal subunit protein uL5c">
    <location>
        <begin position="40"/>
        <end position="262"/>
    </location>
</feature>
<name>RK5_ARATH</name>
<keyword id="KW-0150">Chloroplast</keyword>
<keyword id="KW-0934">Plastid</keyword>
<keyword id="KW-1185">Reference proteome</keyword>
<keyword id="KW-0687">Ribonucleoprotein</keyword>
<keyword id="KW-0689">Ribosomal protein</keyword>
<keyword id="KW-0694">RNA-binding</keyword>
<keyword id="KW-0699">rRNA-binding</keyword>
<keyword id="KW-0809">Transit peptide</keyword>
<gene>
    <name type="primary">RPL5</name>
    <name type="ordered locus">At4g01310</name>
    <name type="ORF">A_IG002N01.3</name>
    <name type="ORF">F2N1.5</name>
</gene>